<protein>
    <recommendedName>
        <fullName>L-lactate dehydrogenase B</fullName>
        <shortName>LDH-B</shortName>
        <ecNumber>1.1.1.27</ecNumber>
    </recommendedName>
</protein>
<dbReference type="EC" id="1.1.1.27"/>
<dbReference type="EMBL" id="M55684">
    <property type="protein sequence ID" value="AAA62697.1"/>
    <property type="molecule type" value="mRNA"/>
</dbReference>
<dbReference type="PIR" id="B36070">
    <property type="entry name" value="B36070"/>
</dbReference>
<dbReference type="SMR" id="P22989"/>
<dbReference type="UniPathway" id="UPA00554">
    <property type="reaction ID" value="UER00611"/>
</dbReference>
<dbReference type="ExpressionAtlas" id="P22989">
    <property type="expression patterns" value="baseline"/>
</dbReference>
<dbReference type="GO" id="GO:0005737">
    <property type="term" value="C:cytoplasm"/>
    <property type="evidence" value="ECO:0007669"/>
    <property type="project" value="InterPro"/>
</dbReference>
<dbReference type="GO" id="GO:0004459">
    <property type="term" value="F:L-lactate dehydrogenase activity"/>
    <property type="evidence" value="ECO:0007669"/>
    <property type="project" value="UniProtKB-EC"/>
</dbReference>
<dbReference type="GO" id="GO:0006089">
    <property type="term" value="P:lactate metabolic process"/>
    <property type="evidence" value="ECO:0007669"/>
    <property type="project" value="TreeGrafter"/>
</dbReference>
<dbReference type="CDD" id="cd05293">
    <property type="entry name" value="LDH_1"/>
    <property type="match status" value="1"/>
</dbReference>
<dbReference type="FunFam" id="3.40.50.720:FF:000018">
    <property type="entry name" value="Malate dehydrogenase"/>
    <property type="match status" value="1"/>
</dbReference>
<dbReference type="Gene3D" id="3.90.110.10">
    <property type="entry name" value="Lactate dehydrogenase/glycoside hydrolase, family 4, C-terminal"/>
    <property type="match status" value="1"/>
</dbReference>
<dbReference type="Gene3D" id="3.40.50.720">
    <property type="entry name" value="NAD(P)-binding Rossmann-like Domain"/>
    <property type="match status" value="1"/>
</dbReference>
<dbReference type="HAMAP" id="MF_00488">
    <property type="entry name" value="Lactate_dehydrog"/>
    <property type="match status" value="1"/>
</dbReference>
<dbReference type="InterPro" id="IPR001557">
    <property type="entry name" value="L-lactate/malate_DH"/>
</dbReference>
<dbReference type="InterPro" id="IPR011304">
    <property type="entry name" value="L-lactate_DH"/>
</dbReference>
<dbReference type="InterPro" id="IPR018177">
    <property type="entry name" value="L-lactate_DH_AS"/>
</dbReference>
<dbReference type="InterPro" id="IPR022383">
    <property type="entry name" value="Lactate/malate_DH_C"/>
</dbReference>
<dbReference type="InterPro" id="IPR001236">
    <property type="entry name" value="Lactate/malate_DH_N"/>
</dbReference>
<dbReference type="InterPro" id="IPR015955">
    <property type="entry name" value="Lactate_DH/Glyco_Ohase_4_C"/>
</dbReference>
<dbReference type="InterPro" id="IPR036291">
    <property type="entry name" value="NAD(P)-bd_dom_sf"/>
</dbReference>
<dbReference type="NCBIfam" id="TIGR01771">
    <property type="entry name" value="L-LDH-NAD"/>
    <property type="match status" value="1"/>
</dbReference>
<dbReference type="PANTHER" id="PTHR43128">
    <property type="entry name" value="L-2-HYDROXYCARBOXYLATE DEHYDROGENASE (NAD(P)(+))"/>
    <property type="match status" value="1"/>
</dbReference>
<dbReference type="PANTHER" id="PTHR43128:SF16">
    <property type="entry name" value="L-LACTATE DEHYDROGENASE"/>
    <property type="match status" value="1"/>
</dbReference>
<dbReference type="Pfam" id="PF02866">
    <property type="entry name" value="Ldh_1_C"/>
    <property type="match status" value="1"/>
</dbReference>
<dbReference type="Pfam" id="PF00056">
    <property type="entry name" value="Ldh_1_N"/>
    <property type="match status" value="1"/>
</dbReference>
<dbReference type="PIRSF" id="PIRSF000102">
    <property type="entry name" value="Lac_mal_DH"/>
    <property type="match status" value="1"/>
</dbReference>
<dbReference type="PRINTS" id="PR00086">
    <property type="entry name" value="LLDHDRGNASE"/>
</dbReference>
<dbReference type="SUPFAM" id="SSF56327">
    <property type="entry name" value="LDH C-terminal domain-like"/>
    <property type="match status" value="1"/>
</dbReference>
<dbReference type="SUPFAM" id="SSF51735">
    <property type="entry name" value="NAD(P)-binding Rossmann-fold domains"/>
    <property type="match status" value="1"/>
</dbReference>
<dbReference type="PROSITE" id="PS00064">
    <property type="entry name" value="L_LDH"/>
    <property type="match status" value="1"/>
</dbReference>
<name>LDHB_HORVU</name>
<comment type="catalytic activity">
    <reaction>
        <text>(S)-lactate + NAD(+) = pyruvate + NADH + H(+)</text>
        <dbReference type="Rhea" id="RHEA:23444"/>
        <dbReference type="ChEBI" id="CHEBI:15361"/>
        <dbReference type="ChEBI" id="CHEBI:15378"/>
        <dbReference type="ChEBI" id="CHEBI:16651"/>
        <dbReference type="ChEBI" id="CHEBI:57540"/>
        <dbReference type="ChEBI" id="CHEBI:57945"/>
        <dbReference type="EC" id="1.1.1.27"/>
    </reaction>
</comment>
<comment type="pathway">
    <text>Fermentation; pyruvate fermentation to lactate; (S)-lactate from pyruvate: step 1/1.</text>
</comment>
<comment type="subunit">
    <text>Tetramer that arise from random association of LDH-A and LDH-B.</text>
</comment>
<comment type="induction">
    <text>By hypoxia.</text>
</comment>
<comment type="similarity">
    <text evidence="2">Belongs to the LDH/MDH superfamily. LDH family.</text>
</comment>
<accession>P22989</accession>
<feature type="chain" id="PRO_0000168490" description="L-lactate dehydrogenase B">
    <location>
        <begin position="1" status="less than"/>
        <end position="344"/>
    </location>
</feature>
<feature type="active site" description="Proton acceptor" evidence="1">
    <location>
        <position position="203"/>
    </location>
</feature>
<feature type="binding site" evidence="1">
    <location>
        <begin position="62"/>
        <end position="67"/>
    </location>
    <ligand>
        <name>NAD(+)</name>
        <dbReference type="ChEBI" id="CHEBI:57540"/>
    </ligand>
</feature>
<feature type="binding site" evidence="1">
    <location>
        <position position="109"/>
    </location>
    <ligand>
        <name>NAD(+)</name>
        <dbReference type="ChEBI" id="CHEBI:57540"/>
    </ligand>
</feature>
<feature type="binding site" evidence="1">
    <location>
        <position position="116"/>
    </location>
    <ligand>
        <name>substrate</name>
    </ligand>
</feature>
<feature type="binding site" evidence="1">
    <location>
        <position position="148"/>
    </location>
    <ligand>
        <name>NAD(+)</name>
        <dbReference type="ChEBI" id="CHEBI:57540"/>
    </ligand>
</feature>
<feature type="binding site" evidence="1">
    <location>
        <position position="148"/>
    </location>
    <ligand>
        <name>substrate</name>
    </ligand>
</feature>
<feature type="binding site" evidence="1">
    <location>
        <position position="179"/>
    </location>
    <ligand>
        <name>substrate</name>
    </ligand>
</feature>
<feature type="binding site" evidence="1">
    <location>
        <position position="258"/>
    </location>
    <ligand>
        <name>substrate</name>
    </ligand>
</feature>
<feature type="non-terminal residue">
    <location>
        <position position="1"/>
    </location>
</feature>
<evidence type="ECO:0000250" key="1"/>
<evidence type="ECO:0000305" key="2"/>
<proteinExistence type="evidence at protein level"/>
<organism>
    <name type="scientific">Hordeum vulgare</name>
    <name type="common">Barley</name>
    <dbReference type="NCBI Taxonomy" id="4513"/>
    <lineage>
        <taxon>Eukaryota</taxon>
        <taxon>Viridiplantae</taxon>
        <taxon>Streptophyta</taxon>
        <taxon>Embryophyta</taxon>
        <taxon>Tracheophyta</taxon>
        <taxon>Spermatophyta</taxon>
        <taxon>Magnoliopsida</taxon>
        <taxon>Liliopsida</taxon>
        <taxon>Poales</taxon>
        <taxon>Poaceae</taxon>
        <taxon>BOP clade</taxon>
        <taxon>Pooideae</taxon>
        <taxon>Triticodae</taxon>
        <taxon>Triticeae</taxon>
        <taxon>Hordeinae</taxon>
        <taxon>Hordeum</taxon>
    </lineage>
</organism>
<sequence>AGDASSGFFRAVADGCPITHTSCSAPHRRLTKVSVIGAGNVGMAIAQTILTQNLADEIALVDALPDKLRGEALDLQHAAAFLPRVRIVSGTDAAVTKNSDLIVVTAGARQIPGETRLNLLQRNVALYRKIVPPVAEHSPDALLLVVSNPVDVLTYVAWKLSGFPASRVIGSGTNLDSSRFRFLVAEHLDVSAQDVQAYMVGEHGDSSVAIWSSISVGGMPALKSLRDSHRSFDEAALEGIRRAVVGGAYEVIGLKGYTSWAIGYSVASLATSLLRDQRRVHPVSVLAAGFHGISDGHEVFLSLPARLGRAGVLGVAEMDLTEAEAAQLRRSAKTLWENCQLLGL</sequence>
<reference key="1">
    <citation type="journal article" date="1990" name="Proc. Natl. Acad. Sci. U.S.A.">
        <title>Hypoxically inducible barley lactate dehydrogenase: cDNA cloning and molecular analysis.</title>
        <authorList>
            <person name="Hondred D."/>
            <person name="Hanson A.D."/>
        </authorList>
    </citation>
    <scope>NUCLEOTIDE SEQUENCE [MRNA]</scope>
    <scope>PARTIAL PROTEIN SEQUENCE</scope>
    <source>
        <strain>cv. Himalaya</strain>
        <tissue>Root</tissue>
    </source>
</reference>
<keyword id="KW-0903">Direct protein sequencing</keyword>
<keyword id="KW-0520">NAD</keyword>
<keyword id="KW-0560">Oxidoreductase</keyword>
<keyword id="KW-0346">Stress response</keyword>